<evidence type="ECO:0000255" key="1">
    <source>
        <dbReference type="HAMAP-Rule" id="MF_01367"/>
    </source>
</evidence>
<evidence type="ECO:0000305" key="2"/>
<comment type="function">
    <text evidence="1">Binds to 23S rRNA. Forms part of two intersubunit bridges in the 70S ribosome.</text>
</comment>
<comment type="subunit">
    <text evidence="1">Part of the 50S ribosomal subunit. Forms a cluster with proteins L3 and L19. In the 70S ribosome, L14 and L19 interact and together make contacts with the 16S rRNA in bridges B5 and B8.</text>
</comment>
<comment type="similarity">
    <text evidence="1">Belongs to the universal ribosomal protein uL14 family.</text>
</comment>
<protein>
    <recommendedName>
        <fullName evidence="1">Large ribosomal subunit protein uL14</fullName>
    </recommendedName>
    <alternativeName>
        <fullName evidence="2">50S ribosomal protein L14</fullName>
    </alternativeName>
</protein>
<gene>
    <name evidence="1" type="primary">rplN</name>
    <name type="ordered locus">Glov_1356</name>
</gene>
<sequence>MIQMQTILDVADNSGAKKLFCIKVLGGSKRKYAGVGDIVVCSVREALPNSKVKKGDVVKAVIVRTAKELGRPDGSYIRFDNNSGVVINNAKEPVGTRIFGPVARELRAKKFMKIISLAPEVL</sequence>
<accession>B3E7U5</accession>
<dbReference type="EMBL" id="CP001089">
    <property type="protein sequence ID" value="ACD95077.1"/>
    <property type="molecule type" value="Genomic_DNA"/>
</dbReference>
<dbReference type="RefSeq" id="WP_012469422.1">
    <property type="nucleotide sequence ID" value="NC_010814.1"/>
</dbReference>
<dbReference type="SMR" id="B3E7U5"/>
<dbReference type="STRING" id="398767.Glov_1356"/>
<dbReference type="KEGG" id="glo:Glov_1356"/>
<dbReference type="eggNOG" id="COG0093">
    <property type="taxonomic scope" value="Bacteria"/>
</dbReference>
<dbReference type="HOGENOM" id="CLU_095071_2_1_7"/>
<dbReference type="OrthoDB" id="9806379at2"/>
<dbReference type="Proteomes" id="UP000002420">
    <property type="component" value="Chromosome"/>
</dbReference>
<dbReference type="GO" id="GO:0022625">
    <property type="term" value="C:cytosolic large ribosomal subunit"/>
    <property type="evidence" value="ECO:0007669"/>
    <property type="project" value="TreeGrafter"/>
</dbReference>
<dbReference type="GO" id="GO:0070180">
    <property type="term" value="F:large ribosomal subunit rRNA binding"/>
    <property type="evidence" value="ECO:0007669"/>
    <property type="project" value="TreeGrafter"/>
</dbReference>
<dbReference type="GO" id="GO:0003735">
    <property type="term" value="F:structural constituent of ribosome"/>
    <property type="evidence" value="ECO:0007669"/>
    <property type="project" value="InterPro"/>
</dbReference>
<dbReference type="GO" id="GO:0006412">
    <property type="term" value="P:translation"/>
    <property type="evidence" value="ECO:0007669"/>
    <property type="project" value="UniProtKB-UniRule"/>
</dbReference>
<dbReference type="CDD" id="cd00337">
    <property type="entry name" value="Ribosomal_uL14"/>
    <property type="match status" value="1"/>
</dbReference>
<dbReference type="FunFam" id="2.40.150.20:FF:000001">
    <property type="entry name" value="50S ribosomal protein L14"/>
    <property type="match status" value="1"/>
</dbReference>
<dbReference type="Gene3D" id="2.40.150.20">
    <property type="entry name" value="Ribosomal protein L14"/>
    <property type="match status" value="1"/>
</dbReference>
<dbReference type="HAMAP" id="MF_01367">
    <property type="entry name" value="Ribosomal_uL14"/>
    <property type="match status" value="1"/>
</dbReference>
<dbReference type="InterPro" id="IPR000218">
    <property type="entry name" value="Ribosomal_uL14"/>
</dbReference>
<dbReference type="InterPro" id="IPR005745">
    <property type="entry name" value="Ribosomal_uL14_bac-type"/>
</dbReference>
<dbReference type="InterPro" id="IPR019972">
    <property type="entry name" value="Ribosomal_uL14_CS"/>
</dbReference>
<dbReference type="InterPro" id="IPR036853">
    <property type="entry name" value="Ribosomal_uL14_sf"/>
</dbReference>
<dbReference type="NCBIfam" id="TIGR01067">
    <property type="entry name" value="rplN_bact"/>
    <property type="match status" value="1"/>
</dbReference>
<dbReference type="PANTHER" id="PTHR11761">
    <property type="entry name" value="50S/60S RIBOSOMAL PROTEIN L14/L23"/>
    <property type="match status" value="1"/>
</dbReference>
<dbReference type="PANTHER" id="PTHR11761:SF3">
    <property type="entry name" value="LARGE RIBOSOMAL SUBUNIT PROTEIN UL14M"/>
    <property type="match status" value="1"/>
</dbReference>
<dbReference type="Pfam" id="PF00238">
    <property type="entry name" value="Ribosomal_L14"/>
    <property type="match status" value="1"/>
</dbReference>
<dbReference type="SMART" id="SM01374">
    <property type="entry name" value="Ribosomal_L14"/>
    <property type="match status" value="1"/>
</dbReference>
<dbReference type="SUPFAM" id="SSF50193">
    <property type="entry name" value="Ribosomal protein L14"/>
    <property type="match status" value="1"/>
</dbReference>
<dbReference type="PROSITE" id="PS00049">
    <property type="entry name" value="RIBOSOMAL_L14"/>
    <property type="match status" value="1"/>
</dbReference>
<feature type="chain" id="PRO_1000144278" description="Large ribosomal subunit protein uL14">
    <location>
        <begin position="1"/>
        <end position="122"/>
    </location>
</feature>
<organism>
    <name type="scientific">Trichlorobacter lovleyi (strain ATCC BAA-1151 / DSM 17278 / SZ)</name>
    <name type="common">Geobacter lovleyi</name>
    <dbReference type="NCBI Taxonomy" id="398767"/>
    <lineage>
        <taxon>Bacteria</taxon>
        <taxon>Pseudomonadati</taxon>
        <taxon>Thermodesulfobacteriota</taxon>
        <taxon>Desulfuromonadia</taxon>
        <taxon>Geobacterales</taxon>
        <taxon>Geobacteraceae</taxon>
        <taxon>Trichlorobacter</taxon>
    </lineage>
</organism>
<keyword id="KW-1185">Reference proteome</keyword>
<keyword id="KW-0687">Ribonucleoprotein</keyword>
<keyword id="KW-0689">Ribosomal protein</keyword>
<keyword id="KW-0694">RNA-binding</keyword>
<keyword id="KW-0699">rRNA-binding</keyword>
<name>RL14_TRIL1</name>
<reference key="1">
    <citation type="submission" date="2008-05" db="EMBL/GenBank/DDBJ databases">
        <title>Complete sequence of chromosome of Geobacter lovleyi SZ.</title>
        <authorList>
            <consortium name="US DOE Joint Genome Institute"/>
            <person name="Lucas S."/>
            <person name="Copeland A."/>
            <person name="Lapidus A."/>
            <person name="Glavina del Rio T."/>
            <person name="Dalin E."/>
            <person name="Tice H."/>
            <person name="Bruce D."/>
            <person name="Goodwin L."/>
            <person name="Pitluck S."/>
            <person name="Chertkov O."/>
            <person name="Meincke L."/>
            <person name="Brettin T."/>
            <person name="Detter J.C."/>
            <person name="Han C."/>
            <person name="Tapia R."/>
            <person name="Kuske C.R."/>
            <person name="Schmutz J."/>
            <person name="Larimer F."/>
            <person name="Land M."/>
            <person name="Hauser L."/>
            <person name="Kyrpides N."/>
            <person name="Mikhailova N."/>
            <person name="Sung Y."/>
            <person name="Fletcher K.E."/>
            <person name="Ritalahti K.M."/>
            <person name="Loeffler F.E."/>
            <person name="Richardson P."/>
        </authorList>
    </citation>
    <scope>NUCLEOTIDE SEQUENCE [LARGE SCALE GENOMIC DNA]</scope>
    <source>
        <strain>ATCC BAA-1151 / DSM 17278 / SZ</strain>
    </source>
</reference>
<proteinExistence type="inferred from homology"/>